<reference key="1">
    <citation type="journal article" date="2004" name="Proc. Natl. Acad. Sci. U.S.A.">
        <title>Genome sequence of the enterobacterial phytopathogen Erwinia carotovora subsp. atroseptica and characterization of virulence factors.</title>
        <authorList>
            <person name="Bell K.S."/>
            <person name="Sebaihia M."/>
            <person name="Pritchard L."/>
            <person name="Holden M.T.G."/>
            <person name="Hyman L.J."/>
            <person name="Holeva M.C."/>
            <person name="Thomson N.R."/>
            <person name="Bentley S.D."/>
            <person name="Churcher L.J.C."/>
            <person name="Mungall K."/>
            <person name="Atkin R."/>
            <person name="Bason N."/>
            <person name="Brooks K."/>
            <person name="Chillingworth T."/>
            <person name="Clark K."/>
            <person name="Doggett J."/>
            <person name="Fraser A."/>
            <person name="Hance Z."/>
            <person name="Hauser H."/>
            <person name="Jagels K."/>
            <person name="Moule S."/>
            <person name="Norbertczak H."/>
            <person name="Ormond D."/>
            <person name="Price C."/>
            <person name="Quail M.A."/>
            <person name="Sanders M."/>
            <person name="Walker D."/>
            <person name="Whitehead S."/>
            <person name="Salmond G.P.C."/>
            <person name="Birch P.R.J."/>
            <person name="Parkhill J."/>
            <person name="Toth I.K."/>
        </authorList>
    </citation>
    <scope>NUCLEOTIDE SEQUENCE [LARGE SCALE GENOMIC DNA]</scope>
    <source>
        <strain>SCRI 1043 / ATCC BAA-672</strain>
    </source>
</reference>
<gene>
    <name evidence="1" type="primary">mtlD</name>
    <name type="ordered locus">ECA0088</name>
</gene>
<keyword id="KW-0520">NAD</keyword>
<keyword id="KW-0560">Oxidoreductase</keyword>
<keyword id="KW-1185">Reference proteome</keyword>
<name>MTLD_PECAS</name>
<evidence type="ECO:0000255" key="1">
    <source>
        <dbReference type="HAMAP-Rule" id="MF_00196"/>
    </source>
</evidence>
<comment type="catalytic activity">
    <reaction evidence="1">
        <text>D-mannitol 1-phosphate + NAD(+) = beta-D-fructose 6-phosphate + NADH + H(+)</text>
        <dbReference type="Rhea" id="RHEA:19661"/>
        <dbReference type="ChEBI" id="CHEBI:15378"/>
        <dbReference type="ChEBI" id="CHEBI:57540"/>
        <dbReference type="ChEBI" id="CHEBI:57634"/>
        <dbReference type="ChEBI" id="CHEBI:57945"/>
        <dbReference type="ChEBI" id="CHEBI:61381"/>
        <dbReference type="EC" id="1.1.1.17"/>
    </reaction>
</comment>
<comment type="similarity">
    <text evidence="1">Belongs to the mannitol dehydrogenase family.</text>
</comment>
<protein>
    <recommendedName>
        <fullName evidence="1">Mannitol-1-phosphate 5-dehydrogenase</fullName>
        <ecNumber evidence="1">1.1.1.17</ecNumber>
    </recommendedName>
</protein>
<organism>
    <name type="scientific">Pectobacterium atrosepticum (strain SCRI 1043 / ATCC BAA-672)</name>
    <name type="common">Erwinia carotovora subsp. atroseptica</name>
    <dbReference type="NCBI Taxonomy" id="218491"/>
    <lineage>
        <taxon>Bacteria</taxon>
        <taxon>Pseudomonadati</taxon>
        <taxon>Pseudomonadota</taxon>
        <taxon>Gammaproteobacteria</taxon>
        <taxon>Enterobacterales</taxon>
        <taxon>Pectobacteriaceae</taxon>
        <taxon>Pectobacterium</taxon>
    </lineage>
</organism>
<feature type="chain" id="PRO_1000011798" description="Mannitol-1-phosphate 5-dehydrogenase">
    <location>
        <begin position="1"/>
        <end position="382"/>
    </location>
</feature>
<feature type="binding site" evidence="1">
    <location>
        <begin position="3"/>
        <end position="14"/>
    </location>
    <ligand>
        <name>NAD(+)</name>
        <dbReference type="ChEBI" id="CHEBI:57540"/>
    </ligand>
</feature>
<sequence length="382" mass="41479">MKALHFGAGNIGRGFIGKLLADANVELTFADVNQPLLDALNSRKSYSVRIVGDNTQVEAVSNVSAVHSGSQDAIALIAAADLVTTAVGPQILEKIAGTIAQGLVKRHEDGNTRPLNIIACENMVRGTSQLKQHVLKLLPEAHQEWVVEHVGFVDSAVDRIVPPSEAGSDDVLAVTVETFSEWIVDKTQFCGEPPAIPGMELTDNLMAFVERKLFTLNTGHAITAYLGQQARHQTIRDAILDPKVRAVVKGAMEESGAVLIKRYGFDADKHAAYINKILSRFENPHLHDDVDRVGRQPLRKLSAGDRLIKPLLGTLEYHLPHDNLIIGIAAAMHYRSEQDPQALELAELIRTLGPQATLVQISGLDADSEVVAQAVNVYNAMQ</sequence>
<proteinExistence type="inferred from homology"/>
<accession>Q6DB14</accession>
<dbReference type="EC" id="1.1.1.17" evidence="1"/>
<dbReference type="EMBL" id="BX950851">
    <property type="protein sequence ID" value="CAG73008.1"/>
    <property type="molecule type" value="Genomic_DNA"/>
</dbReference>
<dbReference type="RefSeq" id="WP_011091731.1">
    <property type="nucleotide sequence ID" value="NC_004547.2"/>
</dbReference>
<dbReference type="SMR" id="Q6DB14"/>
<dbReference type="STRING" id="218491.ECA0088"/>
<dbReference type="KEGG" id="eca:ECA0088"/>
<dbReference type="PATRIC" id="fig|218491.5.peg.90"/>
<dbReference type="eggNOG" id="COG0246">
    <property type="taxonomic scope" value="Bacteria"/>
</dbReference>
<dbReference type="HOGENOM" id="CLU_036089_2_0_6"/>
<dbReference type="OrthoDB" id="271711at2"/>
<dbReference type="Proteomes" id="UP000007966">
    <property type="component" value="Chromosome"/>
</dbReference>
<dbReference type="GO" id="GO:0005829">
    <property type="term" value="C:cytosol"/>
    <property type="evidence" value="ECO:0007669"/>
    <property type="project" value="TreeGrafter"/>
</dbReference>
<dbReference type="GO" id="GO:0008926">
    <property type="term" value="F:mannitol-1-phosphate 5-dehydrogenase activity"/>
    <property type="evidence" value="ECO:0007669"/>
    <property type="project" value="UniProtKB-UniRule"/>
</dbReference>
<dbReference type="GO" id="GO:0019592">
    <property type="term" value="P:mannitol catabolic process"/>
    <property type="evidence" value="ECO:0007669"/>
    <property type="project" value="TreeGrafter"/>
</dbReference>
<dbReference type="FunFam" id="1.10.1040.10:FF:000009">
    <property type="entry name" value="Mannitol-1-phosphate 5-dehydrogenase"/>
    <property type="match status" value="1"/>
</dbReference>
<dbReference type="FunFam" id="3.40.50.720:FF:000075">
    <property type="entry name" value="Mannitol-1-phosphate 5-dehydrogenase"/>
    <property type="match status" value="1"/>
</dbReference>
<dbReference type="Gene3D" id="1.10.1040.10">
    <property type="entry name" value="N-(1-d-carboxylethyl)-l-norvaline Dehydrogenase, domain 2"/>
    <property type="match status" value="1"/>
</dbReference>
<dbReference type="Gene3D" id="3.40.50.720">
    <property type="entry name" value="NAD(P)-binding Rossmann-like Domain"/>
    <property type="match status" value="1"/>
</dbReference>
<dbReference type="HAMAP" id="MF_00196">
    <property type="entry name" value="Mannitol_dehydrog"/>
    <property type="match status" value="1"/>
</dbReference>
<dbReference type="InterPro" id="IPR008927">
    <property type="entry name" value="6-PGluconate_DH-like_C_sf"/>
</dbReference>
<dbReference type="InterPro" id="IPR013328">
    <property type="entry name" value="6PGD_dom2"/>
</dbReference>
<dbReference type="InterPro" id="IPR023028">
    <property type="entry name" value="Mannitol_1_phos_5_DH"/>
</dbReference>
<dbReference type="InterPro" id="IPR000669">
    <property type="entry name" value="Mannitol_DH"/>
</dbReference>
<dbReference type="InterPro" id="IPR013118">
    <property type="entry name" value="Mannitol_DH_C"/>
</dbReference>
<dbReference type="InterPro" id="IPR023027">
    <property type="entry name" value="Mannitol_DH_CS"/>
</dbReference>
<dbReference type="InterPro" id="IPR013131">
    <property type="entry name" value="Mannitol_DH_N"/>
</dbReference>
<dbReference type="InterPro" id="IPR036291">
    <property type="entry name" value="NAD(P)-bd_dom_sf"/>
</dbReference>
<dbReference type="NCBIfam" id="NF002646">
    <property type="entry name" value="PRK02318.1-2"/>
    <property type="match status" value="1"/>
</dbReference>
<dbReference type="NCBIfam" id="NF002650">
    <property type="entry name" value="PRK02318.2-2"/>
    <property type="match status" value="1"/>
</dbReference>
<dbReference type="NCBIfam" id="NF002652">
    <property type="entry name" value="PRK02318.2-5"/>
    <property type="match status" value="1"/>
</dbReference>
<dbReference type="PANTHER" id="PTHR30524:SF0">
    <property type="entry name" value="ALTRONATE OXIDOREDUCTASE-RELATED"/>
    <property type="match status" value="1"/>
</dbReference>
<dbReference type="PANTHER" id="PTHR30524">
    <property type="entry name" value="MANNITOL-1-PHOSPHATE 5-DEHYDROGENASE"/>
    <property type="match status" value="1"/>
</dbReference>
<dbReference type="Pfam" id="PF01232">
    <property type="entry name" value="Mannitol_dh"/>
    <property type="match status" value="1"/>
</dbReference>
<dbReference type="Pfam" id="PF08125">
    <property type="entry name" value="Mannitol_dh_C"/>
    <property type="match status" value="1"/>
</dbReference>
<dbReference type="PRINTS" id="PR00084">
    <property type="entry name" value="MTLDHDRGNASE"/>
</dbReference>
<dbReference type="SUPFAM" id="SSF48179">
    <property type="entry name" value="6-phosphogluconate dehydrogenase C-terminal domain-like"/>
    <property type="match status" value="1"/>
</dbReference>
<dbReference type="SUPFAM" id="SSF51735">
    <property type="entry name" value="NAD(P)-binding Rossmann-fold domains"/>
    <property type="match status" value="1"/>
</dbReference>
<dbReference type="PROSITE" id="PS00974">
    <property type="entry name" value="MANNITOL_DHGENASE"/>
    <property type="match status" value="1"/>
</dbReference>